<comment type="function">
    <text evidence="1">An aminoacyl-tRNA editing enzyme that deacylates mischarged D-aminoacyl-tRNAs. Also deacylates mischarged glycyl-tRNA(Ala), protecting cells against glycine mischarging by AlaRS. Acts via tRNA-based rather than protein-based catalysis; rejects L-amino acids rather than detecting D-amino acids in the active site. By recycling D-aminoacyl-tRNA to D-amino acids and free tRNA molecules, this enzyme counteracts the toxicity associated with the formation of D-aminoacyl-tRNA entities in vivo and helps enforce protein L-homochirality.</text>
</comment>
<comment type="catalytic activity">
    <reaction evidence="1">
        <text>glycyl-tRNA(Ala) + H2O = tRNA(Ala) + glycine + H(+)</text>
        <dbReference type="Rhea" id="RHEA:53744"/>
        <dbReference type="Rhea" id="RHEA-COMP:9657"/>
        <dbReference type="Rhea" id="RHEA-COMP:13640"/>
        <dbReference type="ChEBI" id="CHEBI:15377"/>
        <dbReference type="ChEBI" id="CHEBI:15378"/>
        <dbReference type="ChEBI" id="CHEBI:57305"/>
        <dbReference type="ChEBI" id="CHEBI:78442"/>
        <dbReference type="ChEBI" id="CHEBI:78522"/>
        <dbReference type="EC" id="3.1.1.96"/>
    </reaction>
</comment>
<comment type="catalytic activity">
    <reaction evidence="1">
        <text>a D-aminoacyl-tRNA + H2O = a tRNA + a D-alpha-amino acid + H(+)</text>
        <dbReference type="Rhea" id="RHEA:13953"/>
        <dbReference type="Rhea" id="RHEA-COMP:10123"/>
        <dbReference type="Rhea" id="RHEA-COMP:10124"/>
        <dbReference type="ChEBI" id="CHEBI:15377"/>
        <dbReference type="ChEBI" id="CHEBI:15378"/>
        <dbReference type="ChEBI" id="CHEBI:59871"/>
        <dbReference type="ChEBI" id="CHEBI:78442"/>
        <dbReference type="ChEBI" id="CHEBI:79333"/>
        <dbReference type="EC" id="3.1.1.96"/>
    </reaction>
</comment>
<comment type="subunit">
    <text evidence="1">Homodimer.</text>
</comment>
<comment type="subcellular location">
    <subcellularLocation>
        <location evidence="1">Cytoplasm</location>
    </subcellularLocation>
</comment>
<comment type="domain">
    <text evidence="1">A Gly-cisPro motif from one monomer fits into the active site of the other monomer to allow specific chiral rejection of L-amino acids.</text>
</comment>
<comment type="similarity">
    <text evidence="1">Belongs to the DTD family.</text>
</comment>
<keyword id="KW-0963">Cytoplasm</keyword>
<keyword id="KW-0378">Hydrolase</keyword>
<keyword id="KW-0694">RNA-binding</keyword>
<keyword id="KW-0820">tRNA-binding</keyword>
<dbReference type="EC" id="3.1.1.96" evidence="1"/>
<dbReference type="EMBL" id="CP000947">
    <property type="protein sequence ID" value="ACA30824.1"/>
    <property type="molecule type" value="Genomic_DNA"/>
</dbReference>
<dbReference type="RefSeq" id="WP_011608850.1">
    <property type="nucleotide sequence ID" value="NC_010519.1"/>
</dbReference>
<dbReference type="SMR" id="B0UTI6"/>
<dbReference type="GeneID" id="31487405"/>
<dbReference type="KEGG" id="hsm:HSM_1105"/>
<dbReference type="HOGENOM" id="CLU_076901_1_1_6"/>
<dbReference type="GO" id="GO:0005737">
    <property type="term" value="C:cytoplasm"/>
    <property type="evidence" value="ECO:0007669"/>
    <property type="project" value="UniProtKB-SubCell"/>
</dbReference>
<dbReference type="GO" id="GO:0051500">
    <property type="term" value="F:D-tyrosyl-tRNA(Tyr) deacylase activity"/>
    <property type="evidence" value="ECO:0007669"/>
    <property type="project" value="TreeGrafter"/>
</dbReference>
<dbReference type="GO" id="GO:0106026">
    <property type="term" value="F:Gly-tRNA(Ala) deacylase activity"/>
    <property type="evidence" value="ECO:0007669"/>
    <property type="project" value="UniProtKB-UniRule"/>
</dbReference>
<dbReference type="GO" id="GO:0043908">
    <property type="term" value="F:Ser(Gly)-tRNA(Ala) hydrolase activity"/>
    <property type="evidence" value="ECO:0007669"/>
    <property type="project" value="UniProtKB-UniRule"/>
</dbReference>
<dbReference type="GO" id="GO:0000049">
    <property type="term" value="F:tRNA binding"/>
    <property type="evidence" value="ECO:0007669"/>
    <property type="project" value="UniProtKB-UniRule"/>
</dbReference>
<dbReference type="GO" id="GO:0019478">
    <property type="term" value="P:D-amino acid catabolic process"/>
    <property type="evidence" value="ECO:0007669"/>
    <property type="project" value="UniProtKB-UniRule"/>
</dbReference>
<dbReference type="CDD" id="cd00563">
    <property type="entry name" value="Dtyr_deacylase"/>
    <property type="match status" value="1"/>
</dbReference>
<dbReference type="FunFam" id="3.50.80.10:FF:000001">
    <property type="entry name" value="D-aminoacyl-tRNA deacylase"/>
    <property type="match status" value="1"/>
</dbReference>
<dbReference type="Gene3D" id="3.50.80.10">
    <property type="entry name" value="D-tyrosyl-tRNA(Tyr) deacylase"/>
    <property type="match status" value="1"/>
</dbReference>
<dbReference type="HAMAP" id="MF_00518">
    <property type="entry name" value="Deacylase_Dtd"/>
    <property type="match status" value="1"/>
</dbReference>
<dbReference type="InterPro" id="IPR003732">
    <property type="entry name" value="Daa-tRNA_deacyls_DTD"/>
</dbReference>
<dbReference type="InterPro" id="IPR023509">
    <property type="entry name" value="DTD-like_sf"/>
</dbReference>
<dbReference type="NCBIfam" id="TIGR00256">
    <property type="entry name" value="D-aminoacyl-tRNA deacylase"/>
    <property type="match status" value="1"/>
</dbReference>
<dbReference type="PANTHER" id="PTHR10472:SF5">
    <property type="entry name" value="D-AMINOACYL-TRNA DEACYLASE 1"/>
    <property type="match status" value="1"/>
</dbReference>
<dbReference type="PANTHER" id="PTHR10472">
    <property type="entry name" value="D-TYROSYL-TRNA TYR DEACYLASE"/>
    <property type="match status" value="1"/>
</dbReference>
<dbReference type="Pfam" id="PF02580">
    <property type="entry name" value="Tyr_Deacylase"/>
    <property type="match status" value="1"/>
</dbReference>
<dbReference type="SUPFAM" id="SSF69500">
    <property type="entry name" value="DTD-like"/>
    <property type="match status" value="1"/>
</dbReference>
<protein>
    <recommendedName>
        <fullName evidence="1">D-aminoacyl-tRNA deacylase</fullName>
        <shortName evidence="1">DTD</shortName>
        <ecNumber evidence="1">3.1.1.96</ecNumber>
    </recommendedName>
    <alternativeName>
        <fullName evidence="1">Gly-tRNA(Ala) deacylase</fullName>
    </alternativeName>
</protein>
<organism>
    <name type="scientific">Histophilus somni (strain 2336)</name>
    <name type="common">Haemophilus somnus</name>
    <dbReference type="NCBI Taxonomy" id="228400"/>
    <lineage>
        <taxon>Bacteria</taxon>
        <taxon>Pseudomonadati</taxon>
        <taxon>Pseudomonadota</taxon>
        <taxon>Gammaproteobacteria</taxon>
        <taxon>Pasteurellales</taxon>
        <taxon>Pasteurellaceae</taxon>
        <taxon>Histophilus</taxon>
    </lineage>
</organism>
<proteinExistence type="inferred from homology"/>
<feature type="chain" id="PRO_1000081655" description="D-aminoacyl-tRNA deacylase">
    <location>
        <begin position="1"/>
        <end position="144"/>
    </location>
</feature>
<feature type="short sequence motif" description="Gly-cisPro motif, important for rejection of L-amino acids" evidence="1">
    <location>
        <begin position="136"/>
        <end position="137"/>
    </location>
</feature>
<accession>B0UTI6</accession>
<name>DTD_HISS2</name>
<sequence>MIALIQRVSHAKVEVGQNIVGQIGQGLLVLLGVEKDDDRSKADKLAEKVLNYRIFTDENGKMNLNLQQIGGEILIVSQFTLAADTQKGLRPSFSKGADPELAEKLYQYFSQKCAEKVRVANGQFAADMQVSLTNDGPVTFWLNV</sequence>
<reference key="1">
    <citation type="submission" date="2008-02" db="EMBL/GenBank/DDBJ databases">
        <title>Complete sequence of Haemophilus somnus 2336.</title>
        <authorList>
            <consortium name="US DOE Joint Genome Institute"/>
            <person name="Siddaramappa S."/>
            <person name="Duncan A.J."/>
            <person name="Challacombe J.F."/>
            <person name="Rainey D."/>
            <person name="Gillaspy A.F."/>
            <person name="Carson M."/>
            <person name="Gipson J."/>
            <person name="Gipson M."/>
            <person name="Bruce D."/>
            <person name="Detter J.C."/>
            <person name="Han C.S."/>
            <person name="Land M."/>
            <person name="Tapia R."/>
            <person name="Thompson L.S."/>
            <person name="Orvis J."/>
            <person name="Zaitshik J."/>
            <person name="Barnes G."/>
            <person name="Brettin T.S."/>
            <person name="Dyer D.W."/>
            <person name="Inzana T.J."/>
        </authorList>
    </citation>
    <scope>NUCLEOTIDE SEQUENCE [LARGE SCALE GENOMIC DNA]</scope>
    <source>
        <strain>2336</strain>
    </source>
</reference>
<gene>
    <name evidence="1" type="primary">dtd</name>
    <name type="ordered locus">HSM_1105</name>
</gene>
<evidence type="ECO:0000255" key="1">
    <source>
        <dbReference type="HAMAP-Rule" id="MF_00518"/>
    </source>
</evidence>